<accession>A7HYW1</accession>
<keyword id="KW-0963">Cytoplasm</keyword>
<keyword id="KW-0460">Magnesium</keyword>
<keyword id="KW-0479">Metal-binding</keyword>
<keyword id="KW-0566">Pantothenate biosynthesis</keyword>
<keyword id="KW-1185">Reference proteome</keyword>
<keyword id="KW-0808">Transferase</keyword>
<sequence>MSVQSKIKRVTVPEIRARKGAEPIVSLTAYHAHTARYIDPYVDFLLVGDSLGMVMYGMETTLGVTLDMMIAHGAAVVRGTERALVVVDMPFGSYEESPEIAFRNACRVIKETGCTAVKLEGGTRIAETIRYLTLRGIPVMAHIGLTPQNIQVMGGFKTQGREEGEWAAIEADAKAVAEAGAFAVVLEGMAEPLAARITGQIDIPTIGIGASPNCDGQILVLEDMLGLSPRPAKFVREFATLGAQIAGAAEAYARAVRERSFPAAEHTYSMKKAK</sequence>
<name>PANB_PARL1</name>
<comment type="function">
    <text evidence="1">Catalyzes the reversible reaction in which hydroxymethyl group from 5,10-methylenetetrahydrofolate is transferred onto alpha-ketoisovalerate to form ketopantoate.</text>
</comment>
<comment type="catalytic activity">
    <reaction evidence="1">
        <text>3-methyl-2-oxobutanoate + (6R)-5,10-methylene-5,6,7,8-tetrahydrofolate + H2O = 2-dehydropantoate + (6S)-5,6,7,8-tetrahydrofolate</text>
        <dbReference type="Rhea" id="RHEA:11824"/>
        <dbReference type="ChEBI" id="CHEBI:11561"/>
        <dbReference type="ChEBI" id="CHEBI:11851"/>
        <dbReference type="ChEBI" id="CHEBI:15377"/>
        <dbReference type="ChEBI" id="CHEBI:15636"/>
        <dbReference type="ChEBI" id="CHEBI:57453"/>
        <dbReference type="EC" id="2.1.2.11"/>
    </reaction>
</comment>
<comment type="cofactor">
    <cofactor evidence="1">
        <name>Mg(2+)</name>
        <dbReference type="ChEBI" id="CHEBI:18420"/>
    </cofactor>
    <text evidence="1">Binds 1 Mg(2+) ion per subunit.</text>
</comment>
<comment type="pathway">
    <text evidence="1">Cofactor biosynthesis; (R)-pantothenate biosynthesis; (R)-pantoate from 3-methyl-2-oxobutanoate: step 1/2.</text>
</comment>
<comment type="subunit">
    <text evidence="1">Homodecamer; pentamer of dimers.</text>
</comment>
<comment type="subcellular location">
    <subcellularLocation>
        <location evidence="1">Cytoplasm</location>
    </subcellularLocation>
</comment>
<comment type="similarity">
    <text evidence="1">Belongs to the PanB family.</text>
</comment>
<gene>
    <name evidence="1" type="primary">panB</name>
    <name type="ordered locus">Plav_3495</name>
</gene>
<dbReference type="EC" id="2.1.2.11" evidence="1"/>
<dbReference type="EMBL" id="CP000774">
    <property type="protein sequence ID" value="ABS65094.1"/>
    <property type="molecule type" value="Genomic_DNA"/>
</dbReference>
<dbReference type="RefSeq" id="WP_012112407.1">
    <property type="nucleotide sequence ID" value="NC_009719.1"/>
</dbReference>
<dbReference type="SMR" id="A7HYW1"/>
<dbReference type="STRING" id="402881.Plav_3495"/>
<dbReference type="KEGG" id="pla:Plav_3495"/>
<dbReference type="eggNOG" id="COG0413">
    <property type="taxonomic scope" value="Bacteria"/>
</dbReference>
<dbReference type="HOGENOM" id="CLU_036645_1_0_5"/>
<dbReference type="OrthoDB" id="9781789at2"/>
<dbReference type="UniPathway" id="UPA00028">
    <property type="reaction ID" value="UER00003"/>
</dbReference>
<dbReference type="Proteomes" id="UP000006377">
    <property type="component" value="Chromosome"/>
</dbReference>
<dbReference type="GO" id="GO:0005737">
    <property type="term" value="C:cytoplasm"/>
    <property type="evidence" value="ECO:0007669"/>
    <property type="project" value="UniProtKB-SubCell"/>
</dbReference>
<dbReference type="GO" id="GO:0003864">
    <property type="term" value="F:3-methyl-2-oxobutanoate hydroxymethyltransferase activity"/>
    <property type="evidence" value="ECO:0007669"/>
    <property type="project" value="UniProtKB-UniRule"/>
</dbReference>
<dbReference type="GO" id="GO:0000287">
    <property type="term" value="F:magnesium ion binding"/>
    <property type="evidence" value="ECO:0007669"/>
    <property type="project" value="TreeGrafter"/>
</dbReference>
<dbReference type="GO" id="GO:0015940">
    <property type="term" value="P:pantothenate biosynthetic process"/>
    <property type="evidence" value="ECO:0007669"/>
    <property type="project" value="UniProtKB-UniRule"/>
</dbReference>
<dbReference type="CDD" id="cd06557">
    <property type="entry name" value="KPHMT-like"/>
    <property type="match status" value="1"/>
</dbReference>
<dbReference type="FunFam" id="3.20.20.60:FF:000003">
    <property type="entry name" value="3-methyl-2-oxobutanoate hydroxymethyltransferase"/>
    <property type="match status" value="1"/>
</dbReference>
<dbReference type="Gene3D" id="3.20.20.60">
    <property type="entry name" value="Phosphoenolpyruvate-binding domains"/>
    <property type="match status" value="1"/>
</dbReference>
<dbReference type="HAMAP" id="MF_00156">
    <property type="entry name" value="PanB"/>
    <property type="match status" value="1"/>
</dbReference>
<dbReference type="InterPro" id="IPR003700">
    <property type="entry name" value="Pantoate_hydroxy_MeTrfase"/>
</dbReference>
<dbReference type="InterPro" id="IPR015813">
    <property type="entry name" value="Pyrv/PenolPyrv_kinase-like_dom"/>
</dbReference>
<dbReference type="InterPro" id="IPR040442">
    <property type="entry name" value="Pyrv_kinase-like_dom_sf"/>
</dbReference>
<dbReference type="NCBIfam" id="TIGR00222">
    <property type="entry name" value="panB"/>
    <property type="match status" value="1"/>
</dbReference>
<dbReference type="NCBIfam" id="NF001452">
    <property type="entry name" value="PRK00311.1"/>
    <property type="match status" value="1"/>
</dbReference>
<dbReference type="PANTHER" id="PTHR20881">
    <property type="entry name" value="3-METHYL-2-OXOBUTANOATE HYDROXYMETHYLTRANSFERASE"/>
    <property type="match status" value="1"/>
</dbReference>
<dbReference type="PANTHER" id="PTHR20881:SF0">
    <property type="entry name" value="3-METHYL-2-OXOBUTANOATE HYDROXYMETHYLTRANSFERASE"/>
    <property type="match status" value="1"/>
</dbReference>
<dbReference type="Pfam" id="PF02548">
    <property type="entry name" value="Pantoate_transf"/>
    <property type="match status" value="1"/>
</dbReference>
<dbReference type="PIRSF" id="PIRSF000388">
    <property type="entry name" value="Pantoate_hydroxy_MeTrfase"/>
    <property type="match status" value="1"/>
</dbReference>
<dbReference type="SUPFAM" id="SSF51621">
    <property type="entry name" value="Phosphoenolpyruvate/pyruvate domain"/>
    <property type="match status" value="1"/>
</dbReference>
<reference key="1">
    <citation type="journal article" date="2011" name="Stand. Genomic Sci.">
        <title>Complete genome sequence of Parvibaculum lavamentivorans type strain (DS-1(T)).</title>
        <authorList>
            <person name="Schleheck D."/>
            <person name="Weiss M."/>
            <person name="Pitluck S."/>
            <person name="Bruce D."/>
            <person name="Land M.L."/>
            <person name="Han S."/>
            <person name="Saunders E."/>
            <person name="Tapia R."/>
            <person name="Detter C."/>
            <person name="Brettin T."/>
            <person name="Han J."/>
            <person name="Woyke T."/>
            <person name="Goodwin L."/>
            <person name="Pennacchio L."/>
            <person name="Nolan M."/>
            <person name="Cook A.M."/>
            <person name="Kjelleberg S."/>
            <person name="Thomas T."/>
        </authorList>
    </citation>
    <scope>NUCLEOTIDE SEQUENCE [LARGE SCALE GENOMIC DNA]</scope>
    <source>
        <strain>DS-1 / DSM 13023 / NCIMB 13966</strain>
    </source>
</reference>
<evidence type="ECO:0000255" key="1">
    <source>
        <dbReference type="HAMAP-Rule" id="MF_00156"/>
    </source>
</evidence>
<organism>
    <name type="scientific">Parvibaculum lavamentivorans (strain DS-1 / DSM 13023 / NCIMB 13966)</name>
    <dbReference type="NCBI Taxonomy" id="402881"/>
    <lineage>
        <taxon>Bacteria</taxon>
        <taxon>Pseudomonadati</taxon>
        <taxon>Pseudomonadota</taxon>
        <taxon>Alphaproteobacteria</taxon>
        <taxon>Hyphomicrobiales</taxon>
        <taxon>Parvibaculaceae</taxon>
        <taxon>Parvibaculum</taxon>
    </lineage>
</organism>
<feature type="chain" id="PRO_1000076828" description="3-methyl-2-oxobutanoate hydroxymethyltransferase">
    <location>
        <begin position="1"/>
        <end position="274"/>
    </location>
</feature>
<feature type="active site" description="Proton acceptor" evidence="1">
    <location>
        <position position="187"/>
    </location>
</feature>
<feature type="binding site" evidence="1">
    <location>
        <begin position="49"/>
        <end position="50"/>
    </location>
    <ligand>
        <name>3-methyl-2-oxobutanoate</name>
        <dbReference type="ChEBI" id="CHEBI:11851"/>
    </ligand>
</feature>
<feature type="binding site" evidence="1">
    <location>
        <position position="49"/>
    </location>
    <ligand>
        <name>Mg(2+)</name>
        <dbReference type="ChEBI" id="CHEBI:18420"/>
    </ligand>
</feature>
<feature type="binding site" evidence="1">
    <location>
        <position position="88"/>
    </location>
    <ligand>
        <name>3-methyl-2-oxobutanoate</name>
        <dbReference type="ChEBI" id="CHEBI:11851"/>
    </ligand>
</feature>
<feature type="binding site" evidence="1">
    <location>
        <position position="88"/>
    </location>
    <ligand>
        <name>Mg(2+)</name>
        <dbReference type="ChEBI" id="CHEBI:18420"/>
    </ligand>
</feature>
<feature type="binding site" evidence="1">
    <location>
        <position position="118"/>
    </location>
    <ligand>
        <name>3-methyl-2-oxobutanoate</name>
        <dbReference type="ChEBI" id="CHEBI:11851"/>
    </ligand>
</feature>
<feature type="binding site" evidence="1">
    <location>
        <position position="120"/>
    </location>
    <ligand>
        <name>Mg(2+)</name>
        <dbReference type="ChEBI" id="CHEBI:18420"/>
    </ligand>
</feature>
<protein>
    <recommendedName>
        <fullName evidence="1">3-methyl-2-oxobutanoate hydroxymethyltransferase</fullName>
        <ecNumber evidence="1">2.1.2.11</ecNumber>
    </recommendedName>
    <alternativeName>
        <fullName evidence="1">Ketopantoate hydroxymethyltransferase</fullName>
        <shortName evidence="1">KPHMT</shortName>
    </alternativeName>
</protein>
<proteinExistence type="inferred from homology"/>